<organism>
    <name type="scientific">Escherichia coli (strain SE11)</name>
    <dbReference type="NCBI Taxonomy" id="409438"/>
    <lineage>
        <taxon>Bacteria</taxon>
        <taxon>Pseudomonadati</taxon>
        <taxon>Pseudomonadota</taxon>
        <taxon>Gammaproteobacteria</taxon>
        <taxon>Enterobacterales</taxon>
        <taxon>Enterobacteriaceae</taxon>
        <taxon>Escherichia</taxon>
    </lineage>
</organism>
<name>OPGD_ECOSE</name>
<keyword id="KW-0574">Periplasm</keyword>
<keyword id="KW-0732">Signal</keyword>
<proteinExistence type="inferred from homology"/>
<evidence type="ECO:0000255" key="1">
    <source>
        <dbReference type="HAMAP-Rule" id="MF_01068"/>
    </source>
</evidence>
<accession>B6IAG9</accession>
<dbReference type="EMBL" id="AP009240">
    <property type="protein sequence ID" value="BAG77030.1"/>
    <property type="molecule type" value="Genomic_DNA"/>
</dbReference>
<dbReference type="RefSeq" id="WP_000375956.1">
    <property type="nucleotide sequence ID" value="NC_011415.1"/>
</dbReference>
<dbReference type="SMR" id="B6IAG9"/>
<dbReference type="GeneID" id="93775566"/>
<dbReference type="KEGG" id="ecy:ECSE_1506"/>
<dbReference type="HOGENOM" id="CLU_023403_2_0_6"/>
<dbReference type="UniPathway" id="UPA00637"/>
<dbReference type="Proteomes" id="UP000008199">
    <property type="component" value="Chromosome"/>
</dbReference>
<dbReference type="GO" id="GO:0030288">
    <property type="term" value="C:outer membrane-bounded periplasmic space"/>
    <property type="evidence" value="ECO:0007669"/>
    <property type="project" value="TreeGrafter"/>
</dbReference>
<dbReference type="GO" id="GO:0030246">
    <property type="term" value="F:carbohydrate binding"/>
    <property type="evidence" value="ECO:0007669"/>
    <property type="project" value="InterPro"/>
</dbReference>
<dbReference type="GO" id="GO:0003824">
    <property type="term" value="F:catalytic activity"/>
    <property type="evidence" value="ECO:0007669"/>
    <property type="project" value="InterPro"/>
</dbReference>
<dbReference type="GO" id="GO:0051274">
    <property type="term" value="P:beta-glucan biosynthetic process"/>
    <property type="evidence" value="ECO:0007669"/>
    <property type="project" value="TreeGrafter"/>
</dbReference>
<dbReference type="FunFam" id="2.60.40.10:FF:000379">
    <property type="entry name" value="Glucans biosynthesis protein D"/>
    <property type="match status" value="1"/>
</dbReference>
<dbReference type="FunFam" id="2.70.98.10:FF:000004">
    <property type="entry name" value="Glucans biosynthesis protein D"/>
    <property type="match status" value="1"/>
</dbReference>
<dbReference type="Gene3D" id="2.70.98.10">
    <property type="match status" value="1"/>
</dbReference>
<dbReference type="Gene3D" id="2.60.40.10">
    <property type="entry name" value="Immunoglobulins"/>
    <property type="match status" value="1"/>
</dbReference>
<dbReference type="HAMAP" id="MF_01068">
    <property type="entry name" value="MdoD_OpgD"/>
    <property type="match status" value="1"/>
</dbReference>
<dbReference type="InterPro" id="IPR011013">
    <property type="entry name" value="Gal_mutarotase_sf_dom"/>
</dbReference>
<dbReference type="InterPro" id="IPR014718">
    <property type="entry name" value="GH-type_carb-bd"/>
</dbReference>
<dbReference type="InterPro" id="IPR023724">
    <property type="entry name" value="Glucan_biosyn_MdoD"/>
</dbReference>
<dbReference type="InterPro" id="IPR014438">
    <property type="entry name" value="Glucan_biosyn_MdoG/MdoD"/>
</dbReference>
<dbReference type="InterPro" id="IPR007444">
    <property type="entry name" value="Glucan_biosyn_MdoG_C"/>
</dbReference>
<dbReference type="InterPro" id="IPR013783">
    <property type="entry name" value="Ig-like_fold"/>
</dbReference>
<dbReference type="InterPro" id="IPR014756">
    <property type="entry name" value="Ig_E-set"/>
</dbReference>
<dbReference type="InterPro" id="IPR006311">
    <property type="entry name" value="TAT_signal"/>
</dbReference>
<dbReference type="InterPro" id="IPR019546">
    <property type="entry name" value="TAT_signal_bac_arc"/>
</dbReference>
<dbReference type="NCBIfam" id="TIGR01409">
    <property type="entry name" value="TAT_signal_seq"/>
    <property type="match status" value="1"/>
</dbReference>
<dbReference type="PANTHER" id="PTHR30504">
    <property type="entry name" value="GLUCANS BIOSYNTHESIS PROTEIN"/>
    <property type="match status" value="1"/>
</dbReference>
<dbReference type="PANTHER" id="PTHR30504:SF3">
    <property type="entry name" value="GLUCANS BIOSYNTHESIS PROTEIN D"/>
    <property type="match status" value="1"/>
</dbReference>
<dbReference type="Pfam" id="PF04349">
    <property type="entry name" value="MdoG"/>
    <property type="match status" value="1"/>
</dbReference>
<dbReference type="PIRSF" id="PIRSF006281">
    <property type="entry name" value="MdoG"/>
    <property type="match status" value="1"/>
</dbReference>
<dbReference type="SUPFAM" id="SSF81296">
    <property type="entry name" value="E set domains"/>
    <property type="match status" value="1"/>
</dbReference>
<dbReference type="SUPFAM" id="SSF74650">
    <property type="entry name" value="Galactose mutarotase-like"/>
    <property type="match status" value="1"/>
</dbReference>
<dbReference type="PROSITE" id="PS51318">
    <property type="entry name" value="TAT"/>
    <property type="match status" value="1"/>
</dbReference>
<protein>
    <recommendedName>
        <fullName evidence="1">Glucans biosynthesis protein D</fullName>
    </recommendedName>
</protein>
<feature type="signal peptide" description="Tat-type signal" evidence="1">
    <location>
        <begin position="1"/>
        <end position="32"/>
    </location>
</feature>
<feature type="chain" id="PRO_1000136600" description="Glucans biosynthesis protein D">
    <location>
        <begin position="33"/>
        <end position="551"/>
    </location>
</feature>
<sequence length="551" mass="62768">MDRRRFIKGSMAMAAVCGTSGIASLFSQAAFAADSDIADGQTQRFDFSILQSMAHDLAQTAWRGAPRPLPDTLATMTPQAYNSIQYDAEKSLWHNVENRQLDAQFFHMGMGFRRRVRMFSVDPATHLAREIHFRPELFKYNDAGVDTKQLEGQSDLGFAGFRVFKAPELARRDVVSFLGASYFRAVDDTYQYGLSARGLAIDTYTDSKEEFPDFTAFWFDTVKPGATTFTVYALLDSASITGAYKFTIHCEKSQVIMDVENHLYARKDIKQLGIAPMTSMFSCGTNERRMCDTIHPQIHDSDRLSMWRGNGEWICRPLNNPQKLQFNAYTDNNPKGFGLLQLDRDFSHYQDIMGWYNKRPSLWVEPRNKWGKGTIGLMEIPTTGETLDNIVCFWQPEKAVKAGDEFAFQYRLYWSAQPPVHCPLARVMATRTGMGGFPEGWAPGEHYPEKWARRFAVDFVGGDLKAAAPKGIEPVITLSSGEAKQIEILYIEPIDGYRIQFDWYPTSDSTDPVDMRMYLRCQGDAISETWLYQYFPPAPDKRQYVDDRVMS</sequence>
<reference key="1">
    <citation type="journal article" date="2008" name="DNA Res.">
        <title>Complete genome sequence and comparative analysis of the wild-type commensal Escherichia coli strain SE11 isolated from a healthy adult.</title>
        <authorList>
            <person name="Oshima K."/>
            <person name="Toh H."/>
            <person name="Ogura Y."/>
            <person name="Sasamoto H."/>
            <person name="Morita H."/>
            <person name="Park S.-H."/>
            <person name="Ooka T."/>
            <person name="Iyoda S."/>
            <person name="Taylor T.D."/>
            <person name="Hayashi T."/>
            <person name="Itoh K."/>
            <person name="Hattori M."/>
        </authorList>
    </citation>
    <scope>NUCLEOTIDE SEQUENCE [LARGE SCALE GENOMIC DNA]</scope>
    <source>
        <strain>SE11</strain>
    </source>
</reference>
<gene>
    <name evidence="1" type="primary">mdoD</name>
    <name evidence="1" type="synonym">opgD</name>
    <name type="ordered locus">ECSE_1506</name>
</gene>
<comment type="function">
    <text evidence="1">Probably involved in the control of the structural glucose backbone of osmoregulated periplasmic glucans (OPGs).</text>
</comment>
<comment type="pathway">
    <text evidence="1">Glycan metabolism; osmoregulated periplasmic glucan (OPG) biosynthesis.</text>
</comment>
<comment type="subcellular location">
    <subcellularLocation>
        <location evidence="1">Periplasm</location>
    </subcellularLocation>
</comment>
<comment type="PTM">
    <text>Predicted to be exported by the Tat system. The position of the signal peptide cleavage has not been experimentally proven.</text>
</comment>
<comment type="similarity">
    <text evidence="1">Belongs to the OpgD/OpgG family.</text>
</comment>